<gene>
    <name evidence="1" type="primary">secB</name>
    <name type="ordered locus">Swoo_4875</name>
</gene>
<keyword id="KW-0143">Chaperone</keyword>
<keyword id="KW-0963">Cytoplasm</keyword>
<keyword id="KW-0653">Protein transport</keyword>
<keyword id="KW-1185">Reference proteome</keyword>
<keyword id="KW-0811">Translocation</keyword>
<keyword id="KW-0813">Transport</keyword>
<protein>
    <recommendedName>
        <fullName evidence="1">Protein-export protein SecB</fullName>
    </recommendedName>
</protein>
<proteinExistence type="inferred from homology"/>
<name>SECB_SHEWM</name>
<comment type="function">
    <text evidence="1">One of the proteins required for the normal export of preproteins out of the cell cytoplasm. It is a molecular chaperone that binds to a subset of precursor proteins, maintaining them in a translocation-competent state. It also specifically binds to its receptor SecA.</text>
</comment>
<comment type="subunit">
    <text evidence="1">Homotetramer, a dimer of dimers. One homotetramer interacts with 1 SecA dimer.</text>
</comment>
<comment type="subcellular location">
    <subcellularLocation>
        <location evidence="1">Cytoplasm</location>
    </subcellularLocation>
</comment>
<comment type="similarity">
    <text evidence="1">Belongs to the SecB family.</text>
</comment>
<dbReference type="EMBL" id="CP000961">
    <property type="protein sequence ID" value="ACA89124.1"/>
    <property type="molecule type" value="Genomic_DNA"/>
</dbReference>
<dbReference type="RefSeq" id="WP_012327441.1">
    <property type="nucleotide sequence ID" value="NC_010506.1"/>
</dbReference>
<dbReference type="SMR" id="B1KQ11"/>
<dbReference type="STRING" id="392500.Swoo_4875"/>
<dbReference type="KEGG" id="swd:Swoo_4875"/>
<dbReference type="eggNOG" id="COG1952">
    <property type="taxonomic scope" value="Bacteria"/>
</dbReference>
<dbReference type="HOGENOM" id="CLU_111574_1_0_6"/>
<dbReference type="Proteomes" id="UP000002168">
    <property type="component" value="Chromosome"/>
</dbReference>
<dbReference type="GO" id="GO:0005737">
    <property type="term" value="C:cytoplasm"/>
    <property type="evidence" value="ECO:0007669"/>
    <property type="project" value="UniProtKB-SubCell"/>
</dbReference>
<dbReference type="GO" id="GO:0051082">
    <property type="term" value="F:unfolded protein binding"/>
    <property type="evidence" value="ECO:0007669"/>
    <property type="project" value="InterPro"/>
</dbReference>
<dbReference type="GO" id="GO:0006457">
    <property type="term" value="P:protein folding"/>
    <property type="evidence" value="ECO:0007669"/>
    <property type="project" value="UniProtKB-UniRule"/>
</dbReference>
<dbReference type="GO" id="GO:0051262">
    <property type="term" value="P:protein tetramerization"/>
    <property type="evidence" value="ECO:0007669"/>
    <property type="project" value="InterPro"/>
</dbReference>
<dbReference type="GO" id="GO:0015031">
    <property type="term" value="P:protein transport"/>
    <property type="evidence" value="ECO:0007669"/>
    <property type="project" value="UniProtKB-UniRule"/>
</dbReference>
<dbReference type="Gene3D" id="3.10.420.10">
    <property type="entry name" value="SecB-like"/>
    <property type="match status" value="1"/>
</dbReference>
<dbReference type="HAMAP" id="MF_00821">
    <property type="entry name" value="SecB"/>
    <property type="match status" value="1"/>
</dbReference>
<dbReference type="InterPro" id="IPR003708">
    <property type="entry name" value="SecB"/>
</dbReference>
<dbReference type="InterPro" id="IPR035958">
    <property type="entry name" value="SecB-like_sf"/>
</dbReference>
<dbReference type="NCBIfam" id="NF004393">
    <property type="entry name" value="PRK05751.1-4"/>
    <property type="match status" value="1"/>
</dbReference>
<dbReference type="NCBIfam" id="TIGR00809">
    <property type="entry name" value="secB"/>
    <property type="match status" value="1"/>
</dbReference>
<dbReference type="PANTHER" id="PTHR36918">
    <property type="match status" value="1"/>
</dbReference>
<dbReference type="PANTHER" id="PTHR36918:SF1">
    <property type="entry name" value="PROTEIN-EXPORT PROTEIN SECB"/>
    <property type="match status" value="1"/>
</dbReference>
<dbReference type="Pfam" id="PF02556">
    <property type="entry name" value="SecB"/>
    <property type="match status" value="1"/>
</dbReference>
<dbReference type="PRINTS" id="PR01594">
    <property type="entry name" value="SECBCHAPRONE"/>
</dbReference>
<dbReference type="SUPFAM" id="SSF54611">
    <property type="entry name" value="SecB-like"/>
    <property type="match status" value="1"/>
</dbReference>
<accession>B1KQ11</accession>
<sequence>MAEVANNEQQDPQFNIQRVYTKDISFETPNSPAVFQKEWTPEVKLDLDTRSAKLADNVFEVVLSLTVTAKNGEETAFLCEVQQAGIFAINGLTEQQLAHSLGAYCPNILFPYAREAVGSLVARGTFPQLNLAPVNFDALFAQYVNQRQAGAEEAAAKTEEASA</sequence>
<organism>
    <name type="scientific">Shewanella woodyi (strain ATCC 51908 / MS32)</name>
    <dbReference type="NCBI Taxonomy" id="392500"/>
    <lineage>
        <taxon>Bacteria</taxon>
        <taxon>Pseudomonadati</taxon>
        <taxon>Pseudomonadota</taxon>
        <taxon>Gammaproteobacteria</taxon>
        <taxon>Alteromonadales</taxon>
        <taxon>Shewanellaceae</taxon>
        <taxon>Shewanella</taxon>
    </lineage>
</organism>
<evidence type="ECO:0000255" key="1">
    <source>
        <dbReference type="HAMAP-Rule" id="MF_00821"/>
    </source>
</evidence>
<feature type="chain" id="PRO_1000195348" description="Protein-export protein SecB">
    <location>
        <begin position="1"/>
        <end position="163"/>
    </location>
</feature>
<reference key="1">
    <citation type="submission" date="2008-02" db="EMBL/GenBank/DDBJ databases">
        <title>Complete sequence of Shewanella woodyi ATCC 51908.</title>
        <authorList>
            <consortium name="US DOE Joint Genome Institute"/>
            <person name="Copeland A."/>
            <person name="Lucas S."/>
            <person name="Lapidus A."/>
            <person name="Glavina del Rio T."/>
            <person name="Dalin E."/>
            <person name="Tice H."/>
            <person name="Bruce D."/>
            <person name="Goodwin L."/>
            <person name="Pitluck S."/>
            <person name="Sims D."/>
            <person name="Brettin T."/>
            <person name="Detter J.C."/>
            <person name="Han C."/>
            <person name="Kuske C.R."/>
            <person name="Schmutz J."/>
            <person name="Larimer F."/>
            <person name="Land M."/>
            <person name="Hauser L."/>
            <person name="Kyrpides N."/>
            <person name="Lykidis A."/>
            <person name="Zhao J.-S."/>
            <person name="Richardson P."/>
        </authorList>
    </citation>
    <scope>NUCLEOTIDE SEQUENCE [LARGE SCALE GENOMIC DNA]</scope>
    <source>
        <strain>ATCC 51908 / MS32</strain>
    </source>
</reference>